<sequence>MAIFKSISSISNLTGSMGSSIGASNLNGFASNDNSISCFDGGCGGSGGLGGWSGLSGWGGIGGFNGGCGGSNTNIINLDIDICRRRRRCC</sequence>
<accession>Q54BZ4</accession>
<feature type="chain" id="PRO_0000317350" description="UPF0512 protein L">
    <location>
        <begin position="1"/>
        <end position="90"/>
    </location>
</feature>
<comment type="similarity">
    <text evidence="1">Belongs to the UPF0512 family.</text>
</comment>
<name>U512L_DICDI</name>
<keyword id="KW-1185">Reference proteome</keyword>
<protein>
    <recommendedName>
        <fullName>UPF0512 protein L</fullName>
    </recommendedName>
</protein>
<evidence type="ECO:0000305" key="1"/>
<proteinExistence type="inferred from homology"/>
<organism>
    <name type="scientific">Dictyostelium discoideum</name>
    <name type="common">Social amoeba</name>
    <dbReference type="NCBI Taxonomy" id="44689"/>
    <lineage>
        <taxon>Eukaryota</taxon>
        <taxon>Amoebozoa</taxon>
        <taxon>Evosea</taxon>
        <taxon>Eumycetozoa</taxon>
        <taxon>Dictyostelia</taxon>
        <taxon>Dictyosteliales</taxon>
        <taxon>Dictyosteliaceae</taxon>
        <taxon>Dictyostelium</taxon>
    </lineage>
</organism>
<gene>
    <name type="ORF">DDB_G0293322</name>
</gene>
<dbReference type="EMBL" id="AAFI02000201">
    <property type="protein sequence ID" value="EAL60785.1"/>
    <property type="molecule type" value="Genomic_DNA"/>
</dbReference>
<dbReference type="RefSeq" id="XP_629197.1">
    <property type="nucleotide sequence ID" value="XM_629195.1"/>
</dbReference>
<dbReference type="FunCoup" id="Q54BZ4">
    <property type="interactions" value="640"/>
</dbReference>
<dbReference type="PaxDb" id="44689-DDB0266565"/>
<dbReference type="EnsemblProtists" id="EAL60785">
    <property type="protein sequence ID" value="EAL60785"/>
    <property type="gene ID" value="DDB_G0293322"/>
</dbReference>
<dbReference type="GeneID" id="8629156"/>
<dbReference type="KEGG" id="ddi:DDB_G0293322"/>
<dbReference type="dictyBase" id="DDB_G0293322"/>
<dbReference type="HOGENOM" id="CLU_194865_0_0_1"/>
<dbReference type="InParanoid" id="Q54BZ4"/>
<dbReference type="PRO" id="PR:Q54BZ4"/>
<dbReference type="Proteomes" id="UP000002195">
    <property type="component" value="Chromosome 6"/>
</dbReference>
<reference key="1">
    <citation type="journal article" date="2005" name="Nature">
        <title>The genome of the social amoeba Dictyostelium discoideum.</title>
        <authorList>
            <person name="Eichinger L."/>
            <person name="Pachebat J.A."/>
            <person name="Gloeckner G."/>
            <person name="Rajandream M.A."/>
            <person name="Sucgang R."/>
            <person name="Berriman M."/>
            <person name="Song J."/>
            <person name="Olsen R."/>
            <person name="Szafranski K."/>
            <person name="Xu Q."/>
            <person name="Tunggal B."/>
            <person name="Kummerfeld S."/>
            <person name="Madera M."/>
            <person name="Konfortov B.A."/>
            <person name="Rivero F."/>
            <person name="Bankier A.T."/>
            <person name="Lehmann R."/>
            <person name="Hamlin N."/>
            <person name="Davies R."/>
            <person name="Gaudet P."/>
            <person name="Fey P."/>
            <person name="Pilcher K."/>
            <person name="Chen G."/>
            <person name="Saunders D."/>
            <person name="Sodergren E.J."/>
            <person name="Davis P."/>
            <person name="Kerhornou A."/>
            <person name="Nie X."/>
            <person name="Hall N."/>
            <person name="Anjard C."/>
            <person name="Hemphill L."/>
            <person name="Bason N."/>
            <person name="Farbrother P."/>
            <person name="Desany B."/>
            <person name="Just E."/>
            <person name="Morio T."/>
            <person name="Rost R."/>
            <person name="Churcher C.M."/>
            <person name="Cooper J."/>
            <person name="Haydock S."/>
            <person name="van Driessche N."/>
            <person name="Cronin A."/>
            <person name="Goodhead I."/>
            <person name="Muzny D.M."/>
            <person name="Mourier T."/>
            <person name="Pain A."/>
            <person name="Lu M."/>
            <person name="Harper D."/>
            <person name="Lindsay R."/>
            <person name="Hauser H."/>
            <person name="James K.D."/>
            <person name="Quiles M."/>
            <person name="Madan Babu M."/>
            <person name="Saito T."/>
            <person name="Buchrieser C."/>
            <person name="Wardroper A."/>
            <person name="Felder M."/>
            <person name="Thangavelu M."/>
            <person name="Johnson D."/>
            <person name="Knights A."/>
            <person name="Loulseged H."/>
            <person name="Mungall K.L."/>
            <person name="Oliver K."/>
            <person name="Price C."/>
            <person name="Quail M.A."/>
            <person name="Urushihara H."/>
            <person name="Hernandez J."/>
            <person name="Rabbinowitsch E."/>
            <person name="Steffen D."/>
            <person name="Sanders M."/>
            <person name="Ma J."/>
            <person name="Kohara Y."/>
            <person name="Sharp S."/>
            <person name="Simmonds M.N."/>
            <person name="Spiegler S."/>
            <person name="Tivey A."/>
            <person name="Sugano S."/>
            <person name="White B."/>
            <person name="Walker D."/>
            <person name="Woodward J.R."/>
            <person name="Winckler T."/>
            <person name="Tanaka Y."/>
            <person name="Shaulsky G."/>
            <person name="Schleicher M."/>
            <person name="Weinstock G.M."/>
            <person name="Rosenthal A."/>
            <person name="Cox E.C."/>
            <person name="Chisholm R.L."/>
            <person name="Gibbs R.A."/>
            <person name="Loomis W.F."/>
            <person name="Platzer M."/>
            <person name="Kay R.R."/>
            <person name="Williams J.G."/>
            <person name="Dear P.H."/>
            <person name="Noegel A.A."/>
            <person name="Barrell B.G."/>
            <person name="Kuspa A."/>
        </authorList>
    </citation>
    <scope>NUCLEOTIDE SEQUENCE [LARGE SCALE GENOMIC DNA]</scope>
    <source>
        <strain>AX4</strain>
    </source>
</reference>